<dbReference type="EC" id="3.1.13.4" evidence="1"/>
<dbReference type="EMBL" id="CR382133">
    <property type="protein sequence ID" value="CAG84443.2"/>
    <property type="molecule type" value="Genomic_DNA"/>
</dbReference>
<dbReference type="RefSeq" id="XP_456491.2">
    <property type="nucleotide sequence ID" value="XM_456491.1"/>
</dbReference>
<dbReference type="SMR" id="Q6BZ78"/>
<dbReference type="FunCoup" id="Q6BZ78">
    <property type="interactions" value="722"/>
</dbReference>
<dbReference type="STRING" id="284592.Q6BZ78"/>
<dbReference type="GeneID" id="2899896"/>
<dbReference type="KEGG" id="dha:DEHA2A03388g"/>
<dbReference type="VEuPathDB" id="FungiDB:DEHA2A03388g"/>
<dbReference type="eggNOG" id="KOG1275">
    <property type="taxonomic scope" value="Eukaryota"/>
</dbReference>
<dbReference type="HOGENOM" id="CLU_002369_1_0_1"/>
<dbReference type="InParanoid" id="Q6BZ78"/>
<dbReference type="OMA" id="TQELLWT"/>
<dbReference type="OrthoDB" id="16516at2759"/>
<dbReference type="Proteomes" id="UP000000599">
    <property type="component" value="Chromosome A"/>
</dbReference>
<dbReference type="GO" id="GO:0000932">
    <property type="term" value="C:P-body"/>
    <property type="evidence" value="ECO:0007669"/>
    <property type="project" value="TreeGrafter"/>
</dbReference>
<dbReference type="GO" id="GO:0031251">
    <property type="term" value="C:PAN complex"/>
    <property type="evidence" value="ECO:0007669"/>
    <property type="project" value="UniProtKB-UniRule"/>
</dbReference>
<dbReference type="GO" id="GO:0046872">
    <property type="term" value="F:metal ion binding"/>
    <property type="evidence" value="ECO:0007669"/>
    <property type="project" value="UniProtKB-KW"/>
</dbReference>
<dbReference type="GO" id="GO:0003676">
    <property type="term" value="F:nucleic acid binding"/>
    <property type="evidence" value="ECO:0007669"/>
    <property type="project" value="InterPro"/>
</dbReference>
<dbReference type="GO" id="GO:0004535">
    <property type="term" value="F:poly(A)-specific ribonuclease activity"/>
    <property type="evidence" value="ECO:0007669"/>
    <property type="project" value="UniProtKB-UniRule"/>
</dbReference>
<dbReference type="GO" id="GO:0006397">
    <property type="term" value="P:mRNA processing"/>
    <property type="evidence" value="ECO:0007669"/>
    <property type="project" value="UniProtKB-KW"/>
</dbReference>
<dbReference type="GO" id="GO:0000289">
    <property type="term" value="P:nuclear-transcribed mRNA poly(A) tail shortening"/>
    <property type="evidence" value="ECO:0007669"/>
    <property type="project" value="UniProtKB-UniRule"/>
</dbReference>
<dbReference type="CDD" id="cd06143">
    <property type="entry name" value="PAN2_exo"/>
    <property type="match status" value="1"/>
</dbReference>
<dbReference type="CDD" id="cd02672">
    <property type="entry name" value="Peptidase_C19P"/>
    <property type="match status" value="1"/>
</dbReference>
<dbReference type="FunFam" id="3.30.420.10:FF:000028">
    <property type="entry name" value="PAN2-PAN3 deadenylation complex catalytic subunit PAN2"/>
    <property type="match status" value="1"/>
</dbReference>
<dbReference type="Gene3D" id="3.90.70.10">
    <property type="entry name" value="Cysteine proteinases"/>
    <property type="match status" value="1"/>
</dbReference>
<dbReference type="Gene3D" id="3.30.420.10">
    <property type="entry name" value="Ribonuclease H-like superfamily/Ribonuclease H"/>
    <property type="match status" value="1"/>
</dbReference>
<dbReference type="Gene3D" id="2.130.10.10">
    <property type="entry name" value="YVTN repeat-like/Quinoprotein amine dehydrogenase"/>
    <property type="match status" value="1"/>
</dbReference>
<dbReference type="HAMAP" id="MF_03182">
    <property type="entry name" value="PAN2"/>
    <property type="match status" value="1"/>
</dbReference>
<dbReference type="InterPro" id="IPR013520">
    <property type="entry name" value="Exonuclease_RNaseT/DNA_pol3"/>
</dbReference>
<dbReference type="InterPro" id="IPR030843">
    <property type="entry name" value="PAN2"/>
</dbReference>
<dbReference type="InterPro" id="IPR050785">
    <property type="entry name" value="PAN2-PAN3_catalytic_subunit"/>
</dbReference>
<dbReference type="InterPro" id="IPR048841">
    <property type="entry name" value="PAN2_N"/>
</dbReference>
<dbReference type="InterPro" id="IPR028881">
    <property type="entry name" value="PAN2_UCH_dom"/>
</dbReference>
<dbReference type="InterPro" id="IPR038765">
    <property type="entry name" value="Papain-like_cys_pep_sf"/>
</dbReference>
<dbReference type="InterPro" id="IPR012337">
    <property type="entry name" value="RNaseH-like_sf"/>
</dbReference>
<dbReference type="InterPro" id="IPR036397">
    <property type="entry name" value="RNaseH_sf"/>
</dbReference>
<dbReference type="InterPro" id="IPR028889">
    <property type="entry name" value="USP_dom"/>
</dbReference>
<dbReference type="InterPro" id="IPR015943">
    <property type="entry name" value="WD40/YVTN_repeat-like_dom_sf"/>
</dbReference>
<dbReference type="InterPro" id="IPR036322">
    <property type="entry name" value="WD40_repeat_dom_sf"/>
</dbReference>
<dbReference type="PANTHER" id="PTHR15728">
    <property type="entry name" value="DEADENYLATION COMPLEX CATALYTIC SUBUNIT PAN2"/>
    <property type="match status" value="1"/>
</dbReference>
<dbReference type="PANTHER" id="PTHR15728:SF0">
    <property type="entry name" value="PAN2-PAN3 DEADENYLATION COMPLEX CATALYTIC SUBUNIT PAN2"/>
    <property type="match status" value="1"/>
</dbReference>
<dbReference type="Pfam" id="PF20770">
    <property type="entry name" value="PAN2_N"/>
    <property type="match status" value="1"/>
</dbReference>
<dbReference type="Pfam" id="PF00929">
    <property type="entry name" value="RNase_T"/>
    <property type="match status" value="1"/>
</dbReference>
<dbReference type="Pfam" id="PF13423">
    <property type="entry name" value="UCH_1"/>
    <property type="match status" value="1"/>
</dbReference>
<dbReference type="SMART" id="SM00479">
    <property type="entry name" value="EXOIII"/>
    <property type="match status" value="1"/>
</dbReference>
<dbReference type="SUPFAM" id="SSF54001">
    <property type="entry name" value="Cysteine proteinases"/>
    <property type="match status" value="1"/>
</dbReference>
<dbReference type="SUPFAM" id="SSF53098">
    <property type="entry name" value="Ribonuclease H-like"/>
    <property type="match status" value="1"/>
</dbReference>
<dbReference type="SUPFAM" id="SSF50978">
    <property type="entry name" value="WD40 repeat-like"/>
    <property type="match status" value="1"/>
</dbReference>
<dbReference type="PROSITE" id="PS50235">
    <property type="entry name" value="USP_3"/>
    <property type="match status" value="1"/>
</dbReference>
<reference key="1">
    <citation type="journal article" date="2004" name="Nature">
        <title>Genome evolution in yeasts.</title>
        <authorList>
            <person name="Dujon B."/>
            <person name="Sherman D."/>
            <person name="Fischer G."/>
            <person name="Durrens P."/>
            <person name="Casaregola S."/>
            <person name="Lafontaine I."/>
            <person name="de Montigny J."/>
            <person name="Marck C."/>
            <person name="Neuveglise C."/>
            <person name="Talla E."/>
            <person name="Goffard N."/>
            <person name="Frangeul L."/>
            <person name="Aigle M."/>
            <person name="Anthouard V."/>
            <person name="Babour A."/>
            <person name="Barbe V."/>
            <person name="Barnay S."/>
            <person name="Blanchin S."/>
            <person name="Beckerich J.-M."/>
            <person name="Beyne E."/>
            <person name="Bleykasten C."/>
            <person name="Boisrame A."/>
            <person name="Boyer J."/>
            <person name="Cattolico L."/>
            <person name="Confanioleri F."/>
            <person name="de Daruvar A."/>
            <person name="Despons L."/>
            <person name="Fabre E."/>
            <person name="Fairhead C."/>
            <person name="Ferry-Dumazet H."/>
            <person name="Groppi A."/>
            <person name="Hantraye F."/>
            <person name="Hennequin C."/>
            <person name="Jauniaux N."/>
            <person name="Joyet P."/>
            <person name="Kachouri R."/>
            <person name="Kerrest A."/>
            <person name="Koszul R."/>
            <person name="Lemaire M."/>
            <person name="Lesur I."/>
            <person name="Ma L."/>
            <person name="Muller H."/>
            <person name="Nicaud J.-M."/>
            <person name="Nikolski M."/>
            <person name="Oztas S."/>
            <person name="Ozier-Kalogeropoulos O."/>
            <person name="Pellenz S."/>
            <person name="Potier S."/>
            <person name="Richard G.-F."/>
            <person name="Straub M.-L."/>
            <person name="Suleau A."/>
            <person name="Swennen D."/>
            <person name="Tekaia F."/>
            <person name="Wesolowski-Louvel M."/>
            <person name="Westhof E."/>
            <person name="Wirth B."/>
            <person name="Zeniou-Meyer M."/>
            <person name="Zivanovic Y."/>
            <person name="Bolotin-Fukuhara M."/>
            <person name="Thierry A."/>
            <person name="Bouchier C."/>
            <person name="Caudron B."/>
            <person name="Scarpelli C."/>
            <person name="Gaillardin C."/>
            <person name="Weissenbach J."/>
            <person name="Wincker P."/>
            <person name="Souciet J.-L."/>
        </authorList>
    </citation>
    <scope>NUCLEOTIDE SEQUENCE [LARGE SCALE GENOMIC DNA]</scope>
    <source>
        <strain>ATCC 36239 / CBS 767 / BCRC 21394 / JCM 1990 / NBRC 0083 / IGC 2968</strain>
    </source>
</reference>
<feature type="chain" id="PRO_0000295345" description="PAN2-PAN3 deadenylation complex catalytic subunit PAN2">
    <location>
        <begin position="1"/>
        <end position="1124"/>
    </location>
</feature>
<feature type="repeat" description="WD 1" evidence="1">
    <location>
        <begin position="19"/>
        <end position="58"/>
    </location>
</feature>
<feature type="repeat" description="WD 2" evidence="1">
    <location>
        <begin position="118"/>
        <end position="157"/>
    </location>
</feature>
<feature type="repeat" description="WD 3" evidence="1">
    <location>
        <begin position="158"/>
        <end position="195"/>
    </location>
</feature>
<feature type="repeat" description="WD 4" evidence="1">
    <location>
        <begin position="309"/>
        <end position="348"/>
    </location>
</feature>
<feature type="domain" description="USP" evidence="1">
    <location>
        <begin position="484"/>
        <end position="861"/>
    </location>
</feature>
<feature type="domain" description="Exonuclease" evidence="1">
    <location>
        <begin position="917"/>
        <end position="1091"/>
    </location>
</feature>
<feature type="region of interest" description="Linker" evidence="1">
    <location>
        <begin position="351"/>
        <end position="484"/>
    </location>
</feature>
<feature type="binding site" evidence="1">
    <location>
        <position position="920"/>
    </location>
    <ligand>
        <name>a divalent metal cation</name>
        <dbReference type="ChEBI" id="CHEBI:60240"/>
        <note>catalytic</note>
    </ligand>
</feature>
<feature type="binding site" evidence="1">
    <location>
        <position position="922"/>
    </location>
    <ligand>
        <name>a divalent metal cation</name>
        <dbReference type="ChEBI" id="CHEBI:60240"/>
        <note>catalytic</note>
    </ligand>
</feature>
<feature type="binding site" evidence="1">
    <location>
        <position position="1030"/>
    </location>
    <ligand>
        <name>a divalent metal cation</name>
        <dbReference type="ChEBI" id="CHEBI:60240"/>
        <note>catalytic</note>
    </ligand>
</feature>
<feature type="binding site" evidence="1">
    <location>
        <position position="1083"/>
    </location>
    <ligand>
        <name>a divalent metal cation</name>
        <dbReference type="ChEBI" id="CHEBI:60240"/>
        <note>catalytic</note>
    </ligand>
</feature>
<gene>
    <name evidence="1" type="primary">PAN2</name>
    <name type="ordered locus">DEHA2A03388g</name>
</gene>
<name>PAN2_DEBHA</name>
<comment type="function">
    <text evidence="1">Catalytic subunit of the poly(A)-nuclease (PAN) deadenylation complex, one of two cytoplasmic mRNA deadenylases involved in mRNA turnover. PAN specifically shortens poly(A) tails of RNA and the activity is stimulated by poly(A)-binding protein PAB1. PAN deadenylation is followed by rapid degradation of the shortened mRNA tails by the CCR4-NOT complex. Deadenylated mRNAs are then degraded by two alternative mechanisms, namely exosome-mediated 3'-5' exonucleolytic degradation, or deadenylation-dependent mRNA decaping and subsequent 5'-3' exonucleolytic degradation by XRN1. May also be involved in post-transcriptional maturation of mRNA poly(A) tails.</text>
</comment>
<comment type="catalytic activity">
    <reaction evidence="1">
        <text>Exonucleolytic cleavage of poly(A) to 5'-AMP.</text>
        <dbReference type="EC" id="3.1.13.4"/>
    </reaction>
</comment>
<comment type="cofactor">
    <cofactor evidence="1">
        <name>a divalent metal cation</name>
        <dbReference type="ChEBI" id="CHEBI:60240"/>
    </cofactor>
    <text evidence="1">Binds 2 metal cations per subunit in the catalytic exonuclease domain.</text>
</comment>
<comment type="activity regulation">
    <text evidence="1">Positively regulated by the regulatory subunit PAN3.</text>
</comment>
<comment type="subunit">
    <text evidence="1">Forms a heterotrimer with an asymmetric homodimer of the regulatory subunit PAN3 to form the poly(A)-nuclease (PAN) deadenylation complex.</text>
</comment>
<comment type="subcellular location">
    <subcellularLocation>
        <location evidence="1">Cytoplasm</location>
    </subcellularLocation>
</comment>
<comment type="domain">
    <text evidence="1">Contains a pseudo-UCH domain. This ubiquitin C-terminal hydrolase (UCH)-like or ubiquitin specific protease (USP)-like domain is predicted to be catalytically inactive because it lacks the active site catalytic triad characteristic of thiol proteases, with residues at the equivalent structural positions that are incompatible with catalysis, and it cannot bind ubiquitin. It functions as a structural scaffold for intra- and intermolecular interactions in the complex.</text>
</comment>
<comment type="domain">
    <text evidence="1">The linker, or PAN3 interaction domain (PID), between the WD40 repeats and the pseudo-UCH domain mediates interaction with PAN3.</text>
</comment>
<comment type="similarity">
    <text evidence="1">Belongs to the peptidase C19 family. PAN2 subfamily.</text>
</comment>
<sequence>MEGWGEISRIAATASSSVIDNSKITSLQFDNQQNLLWCGDSKGTTRSFTPQSTSIPMPYPALHLSQYSKFKTSLGTSPVKQYLNHQKGILSLSHNCVNFNNRRGLTQLSLNSESLKEPGFNNLSCMTFNSNTNNDLVIAGDSLFKVDLLKPNMTTSFNHTGKVSMIDNTLNYLTLGKSNGEIEIFDPVSNQTVKSFYGHNGLLSDIDVQGNYVASCGYSLRPRRNQASQSSYMIDPLVNIYDLRMMRSLPPIPFSAGASFVKFHPKLPNIMIIASSLGQLQFVDIYDQSNVYLYQADLSNVNASTPTTSSNTYLANLEVSGNGEFITFSDGFQNLHLWSFKNNNSKNFINFPSYLEQPDFSPPFQQNHINVDDVVPLSSIGMPYYKDLLLSNYASDLHFTKELSKLPNHLDPELLQNQYSQVLPYNTLKYGKRNLNKFYVPLQNNVSTKQKLFPKFISEKNGHDSFDNENSNIFEYKLSNKFEVPNCYSNLKIQYSKFGVEDFDFSFYNRTKYSGLENHLDNSYINSLLQLYKYSPVFQNFIIKHLLKEWLPNDLTTIIQNGNPQGSSILNELGYIFDMMNKSHGKNCKTSNFSNVLSQNQVAQMQELINKDDCKNLNAFEIRAIIGKFNKFLLSTCNNDLLNQFNTSLSEITNIGYEIEIKSNGCNINNVNYNSQLTVDLMSPPINKLSILISANSTSATKKNLNILNYLDYSMNQFKTIKCQQCNNSFPHLLEIRQSLVHLPPVISINVNFTGQEFNLIQNFPNWLVPEFYTYGMNNKVSFKLHSNDNLSNKYELLGYVCEINVGSEFLKGKHNLVSYIKIESKWYLFNDFLVMPIPESEVFDLSYHWKKPIIVMYQLANHADFGSFQQQSFAQLPDLNDSILYRDHFAGGIRDSIKREYELLTKDEAPNAGTLIAIDAEFVALNPEELEVHYGGVRNLIKPRNLSLARISVLRGDNGPKQGVPFIDDYIIHTCFIDDYLTSFSGIEPGDLDPSSSTKTLTTLQTSYRKLWLLLNLGCIFVGHGLQNDFRCINLHVPKNQIRDTADFFYLPELKRKLSLKFLAYILLKEKVQTGNHDSIEDANTALLLYKKYLELTAIGEFESTLHRIYMDGQQLRFRVPDS</sequence>
<organism>
    <name type="scientific">Debaryomyces hansenii (strain ATCC 36239 / CBS 767 / BCRC 21394 / JCM 1990 / NBRC 0083 / IGC 2968)</name>
    <name type="common">Yeast</name>
    <name type="synonym">Torulaspora hansenii</name>
    <dbReference type="NCBI Taxonomy" id="284592"/>
    <lineage>
        <taxon>Eukaryota</taxon>
        <taxon>Fungi</taxon>
        <taxon>Dikarya</taxon>
        <taxon>Ascomycota</taxon>
        <taxon>Saccharomycotina</taxon>
        <taxon>Pichiomycetes</taxon>
        <taxon>Debaryomycetaceae</taxon>
        <taxon>Debaryomyces</taxon>
    </lineage>
</organism>
<keyword id="KW-0963">Cytoplasm</keyword>
<keyword id="KW-0269">Exonuclease</keyword>
<keyword id="KW-0378">Hydrolase</keyword>
<keyword id="KW-0479">Metal-binding</keyword>
<keyword id="KW-0507">mRNA processing</keyword>
<keyword id="KW-0540">Nuclease</keyword>
<keyword id="KW-1185">Reference proteome</keyword>
<keyword id="KW-0677">Repeat</keyword>
<keyword id="KW-0853">WD repeat</keyword>
<protein>
    <recommendedName>
        <fullName evidence="1">PAN2-PAN3 deadenylation complex catalytic subunit PAN2</fullName>
        <ecNumber evidence="1">3.1.13.4</ecNumber>
    </recommendedName>
    <alternativeName>
        <fullName evidence="1">PAB1P-dependent poly(A)-specific ribonuclease</fullName>
    </alternativeName>
    <alternativeName>
        <fullName evidence="1">Poly(A)-nuclease deadenylation complex subunit 2</fullName>
        <shortName evidence="1">PAN deadenylation complex subunit 2</shortName>
    </alternativeName>
</protein>
<proteinExistence type="inferred from homology"/>
<evidence type="ECO:0000255" key="1">
    <source>
        <dbReference type="HAMAP-Rule" id="MF_03182"/>
    </source>
</evidence>
<accession>Q6BZ78</accession>